<reference key="1">
    <citation type="journal article" date="2009" name="PLoS Genet.">
        <title>Organised genome dynamics in the Escherichia coli species results in highly diverse adaptive paths.</title>
        <authorList>
            <person name="Touchon M."/>
            <person name="Hoede C."/>
            <person name="Tenaillon O."/>
            <person name="Barbe V."/>
            <person name="Baeriswyl S."/>
            <person name="Bidet P."/>
            <person name="Bingen E."/>
            <person name="Bonacorsi S."/>
            <person name="Bouchier C."/>
            <person name="Bouvet O."/>
            <person name="Calteau A."/>
            <person name="Chiapello H."/>
            <person name="Clermont O."/>
            <person name="Cruveiller S."/>
            <person name="Danchin A."/>
            <person name="Diard M."/>
            <person name="Dossat C."/>
            <person name="Karoui M.E."/>
            <person name="Frapy E."/>
            <person name="Garry L."/>
            <person name="Ghigo J.M."/>
            <person name="Gilles A.M."/>
            <person name="Johnson J."/>
            <person name="Le Bouguenec C."/>
            <person name="Lescat M."/>
            <person name="Mangenot S."/>
            <person name="Martinez-Jehanne V."/>
            <person name="Matic I."/>
            <person name="Nassif X."/>
            <person name="Oztas S."/>
            <person name="Petit M.A."/>
            <person name="Pichon C."/>
            <person name="Rouy Z."/>
            <person name="Ruf C.S."/>
            <person name="Schneider D."/>
            <person name="Tourret J."/>
            <person name="Vacherie B."/>
            <person name="Vallenet D."/>
            <person name="Medigue C."/>
            <person name="Rocha E.P.C."/>
            <person name="Denamur E."/>
        </authorList>
    </citation>
    <scope>NUCLEOTIDE SEQUENCE [LARGE SCALE GENOMIC DNA]</scope>
    <source>
        <strain>ED1a</strain>
    </source>
</reference>
<protein>
    <recommendedName>
        <fullName evidence="1">D-erythrose-4-phosphate dehydrogenase</fullName>
        <shortName evidence="1">E4PDH</shortName>
        <ecNumber evidence="1">1.2.1.72</ecNumber>
    </recommendedName>
</protein>
<keyword id="KW-0963">Cytoplasm</keyword>
<keyword id="KW-0520">NAD</keyword>
<keyword id="KW-0560">Oxidoreductase</keyword>
<keyword id="KW-0664">Pyridoxine biosynthesis</keyword>
<organism>
    <name type="scientific">Escherichia coli O81 (strain ED1a)</name>
    <dbReference type="NCBI Taxonomy" id="585397"/>
    <lineage>
        <taxon>Bacteria</taxon>
        <taxon>Pseudomonadati</taxon>
        <taxon>Pseudomonadota</taxon>
        <taxon>Gammaproteobacteria</taxon>
        <taxon>Enterobacterales</taxon>
        <taxon>Enterobacteriaceae</taxon>
        <taxon>Escherichia</taxon>
    </lineage>
</organism>
<comment type="function">
    <text evidence="1">Catalyzes the NAD-dependent conversion of D-erythrose 4-phosphate to 4-phosphoerythronate.</text>
</comment>
<comment type="catalytic activity">
    <reaction evidence="1">
        <text>D-erythrose 4-phosphate + NAD(+) + H2O = 4-phospho-D-erythronate + NADH + 2 H(+)</text>
        <dbReference type="Rhea" id="RHEA:12056"/>
        <dbReference type="ChEBI" id="CHEBI:15377"/>
        <dbReference type="ChEBI" id="CHEBI:15378"/>
        <dbReference type="ChEBI" id="CHEBI:16897"/>
        <dbReference type="ChEBI" id="CHEBI:57540"/>
        <dbReference type="ChEBI" id="CHEBI:57945"/>
        <dbReference type="ChEBI" id="CHEBI:58766"/>
        <dbReference type="EC" id="1.2.1.72"/>
    </reaction>
</comment>
<comment type="pathway">
    <text evidence="1">Cofactor biosynthesis; pyridoxine 5'-phosphate biosynthesis; pyridoxine 5'-phosphate from D-erythrose 4-phosphate: step 1/5.</text>
</comment>
<comment type="subunit">
    <text evidence="1">Homotetramer.</text>
</comment>
<comment type="subcellular location">
    <subcellularLocation>
        <location evidence="1">Cytoplasm</location>
    </subcellularLocation>
</comment>
<comment type="similarity">
    <text evidence="1">Belongs to the glyceraldehyde-3-phosphate dehydrogenase family. Epd subfamily.</text>
</comment>
<dbReference type="EC" id="1.2.1.72" evidence="1"/>
<dbReference type="EMBL" id="CU928162">
    <property type="protein sequence ID" value="CAR09538.2"/>
    <property type="molecule type" value="Genomic_DNA"/>
</dbReference>
<dbReference type="RefSeq" id="WP_000218483.1">
    <property type="nucleotide sequence ID" value="NC_011745.1"/>
</dbReference>
<dbReference type="SMR" id="B7MZM0"/>
<dbReference type="KEGG" id="ecq:ECED1_3382"/>
<dbReference type="HOGENOM" id="CLU_030140_0_2_6"/>
<dbReference type="UniPathway" id="UPA00244">
    <property type="reaction ID" value="UER00309"/>
</dbReference>
<dbReference type="Proteomes" id="UP000000748">
    <property type="component" value="Chromosome"/>
</dbReference>
<dbReference type="GO" id="GO:0005737">
    <property type="term" value="C:cytoplasm"/>
    <property type="evidence" value="ECO:0007669"/>
    <property type="project" value="UniProtKB-SubCell"/>
</dbReference>
<dbReference type="GO" id="GO:0048001">
    <property type="term" value="F:erythrose-4-phosphate dehydrogenase activity"/>
    <property type="evidence" value="ECO:0007669"/>
    <property type="project" value="UniProtKB-UniRule"/>
</dbReference>
<dbReference type="GO" id="GO:0051287">
    <property type="term" value="F:NAD binding"/>
    <property type="evidence" value="ECO:0007669"/>
    <property type="project" value="InterPro"/>
</dbReference>
<dbReference type="GO" id="GO:0042823">
    <property type="term" value="P:pyridoxal phosphate biosynthetic process"/>
    <property type="evidence" value="ECO:0007669"/>
    <property type="project" value="UniProtKB-UniRule"/>
</dbReference>
<dbReference type="GO" id="GO:0008615">
    <property type="term" value="P:pyridoxine biosynthetic process"/>
    <property type="evidence" value="ECO:0007669"/>
    <property type="project" value="UniProtKB-UniRule"/>
</dbReference>
<dbReference type="CDD" id="cd23937">
    <property type="entry name" value="GAPDH_C_E4PDH"/>
    <property type="match status" value="1"/>
</dbReference>
<dbReference type="CDD" id="cd17892">
    <property type="entry name" value="GAPDH_N_E4PDH"/>
    <property type="match status" value="1"/>
</dbReference>
<dbReference type="FunFam" id="3.30.360.10:FF:000007">
    <property type="entry name" value="D-erythrose-4-phosphate dehydrogenase"/>
    <property type="match status" value="1"/>
</dbReference>
<dbReference type="FunFam" id="3.40.50.720:FF:000001">
    <property type="entry name" value="Glyceraldehyde-3-phosphate dehydrogenase"/>
    <property type="match status" value="1"/>
</dbReference>
<dbReference type="Gene3D" id="3.30.360.10">
    <property type="entry name" value="Dihydrodipicolinate Reductase, domain 2"/>
    <property type="match status" value="1"/>
</dbReference>
<dbReference type="Gene3D" id="3.40.50.720">
    <property type="entry name" value="NAD(P)-binding Rossmann-like Domain"/>
    <property type="match status" value="1"/>
</dbReference>
<dbReference type="HAMAP" id="MF_01640">
    <property type="entry name" value="E4P_dehydrog"/>
    <property type="match status" value="1"/>
</dbReference>
<dbReference type="InterPro" id="IPR006422">
    <property type="entry name" value="E4P_DH_bac"/>
</dbReference>
<dbReference type="InterPro" id="IPR020831">
    <property type="entry name" value="GlycerAld/Erythrose_P_DH"/>
</dbReference>
<dbReference type="InterPro" id="IPR020830">
    <property type="entry name" value="GlycerAld_3-P_DH_AS"/>
</dbReference>
<dbReference type="InterPro" id="IPR020829">
    <property type="entry name" value="GlycerAld_3-P_DH_cat"/>
</dbReference>
<dbReference type="InterPro" id="IPR020828">
    <property type="entry name" value="GlycerAld_3-P_DH_NAD(P)-bd"/>
</dbReference>
<dbReference type="InterPro" id="IPR036291">
    <property type="entry name" value="NAD(P)-bd_dom_sf"/>
</dbReference>
<dbReference type="NCBIfam" id="TIGR01532">
    <property type="entry name" value="E4PD_g-proteo"/>
    <property type="match status" value="1"/>
</dbReference>
<dbReference type="NCBIfam" id="NF010058">
    <property type="entry name" value="PRK13535.1"/>
    <property type="match status" value="1"/>
</dbReference>
<dbReference type="PANTHER" id="PTHR43148">
    <property type="entry name" value="GLYCERALDEHYDE-3-PHOSPHATE DEHYDROGENASE 2"/>
    <property type="match status" value="1"/>
</dbReference>
<dbReference type="Pfam" id="PF02800">
    <property type="entry name" value="Gp_dh_C"/>
    <property type="match status" value="1"/>
</dbReference>
<dbReference type="Pfam" id="PF00044">
    <property type="entry name" value="Gp_dh_N"/>
    <property type="match status" value="1"/>
</dbReference>
<dbReference type="PIRSF" id="PIRSF000149">
    <property type="entry name" value="GAP_DH"/>
    <property type="match status" value="1"/>
</dbReference>
<dbReference type="PRINTS" id="PR00078">
    <property type="entry name" value="G3PDHDRGNASE"/>
</dbReference>
<dbReference type="SMART" id="SM00846">
    <property type="entry name" value="Gp_dh_N"/>
    <property type="match status" value="1"/>
</dbReference>
<dbReference type="SUPFAM" id="SSF55347">
    <property type="entry name" value="Glyceraldehyde-3-phosphate dehydrogenase-like, C-terminal domain"/>
    <property type="match status" value="1"/>
</dbReference>
<dbReference type="SUPFAM" id="SSF51735">
    <property type="entry name" value="NAD(P)-binding Rossmann-fold domains"/>
    <property type="match status" value="1"/>
</dbReference>
<dbReference type="PROSITE" id="PS00071">
    <property type="entry name" value="GAPDH"/>
    <property type="match status" value="1"/>
</dbReference>
<evidence type="ECO:0000255" key="1">
    <source>
        <dbReference type="HAMAP-Rule" id="MF_01640"/>
    </source>
</evidence>
<proteinExistence type="inferred from homology"/>
<accession>B7MZM0</accession>
<name>E4PD_ECO81</name>
<gene>
    <name evidence="1" type="primary">epd</name>
    <name type="ordered locus">ECED1_3382</name>
</gene>
<feature type="chain" id="PRO_1000186822" description="D-erythrose-4-phosphate dehydrogenase">
    <location>
        <begin position="1"/>
        <end position="339"/>
    </location>
</feature>
<feature type="active site" description="Nucleophile" evidence="1">
    <location>
        <position position="155"/>
    </location>
</feature>
<feature type="binding site" evidence="1">
    <location>
        <begin position="12"/>
        <end position="13"/>
    </location>
    <ligand>
        <name>NAD(+)</name>
        <dbReference type="ChEBI" id="CHEBI:57540"/>
    </ligand>
</feature>
<feature type="binding site" evidence="1">
    <location>
        <position position="81"/>
    </location>
    <ligand>
        <name>NAD(+)</name>
        <dbReference type="ChEBI" id="CHEBI:57540"/>
    </ligand>
</feature>
<feature type="binding site" evidence="1">
    <location>
        <begin position="154"/>
        <end position="156"/>
    </location>
    <ligand>
        <name>substrate</name>
    </ligand>
</feature>
<feature type="binding site" evidence="1">
    <location>
        <position position="200"/>
    </location>
    <ligand>
        <name>substrate</name>
    </ligand>
</feature>
<feature type="binding site" evidence="1">
    <location>
        <begin position="213"/>
        <end position="214"/>
    </location>
    <ligand>
        <name>substrate</name>
    </ligand>
</feature>
<feature type="binding site" evidence="1">
    <location>
        <position position="236"/>
    </location>
    <ligand>
        <name>substrate</name>
    </ligand>
</feature>
<feature type="binding site" evidence="1">
    <location>
        <position position="318"/>
    </location>
    <ligand>
        <name>NAD(+)</name>
        <dbReference type="ChEBI" id="CHEBI:57540"/>
    </ligand>
</feature>
<feature type="site" description="Activates thiol group during catalysis" evidence="1">
    <location>
        <position position="182"/>
    </location>
</feature>
<sequence length="339" mass="37329">MTVRVAINGFGRIGRNVVRALYESGRRAEITVVAINELADAAGMAHLLKYDTSHGRFAWEVRQERDQLFVGDDAIRVLHERSLQSLPWRELGVDVVLDCTGVYGSREHGEAHIAAGAKKVLFSHPGSNDLDTTVVYGVNQDQLRAEHRIVSNASCTTNCIIPVIKLLDDAYGIESGTVTTIHSAMHDQQVIDAYHPDLRRTRAASQSIIPVDTKLAAGITRFFPQFNDRFEAIAVRVPTINVTAIDLSVTVKKPVKANEVNLLLQKAAQGAFHGIVDYTELPLVSVDFNHDPHSAIVDGTQTRVSGAHLIKTLVWCDNEWGFANRMLDTTLAMATVAFR</sequence>